<feature type="chain" id="PRO_0000210701" description="Uncharacterized protein MPN_634">
    <location>
        <begin position="1"/>
        <end position="181"/>
    </location>
</feature>
<reference key="1">
    <citation type="journal article" date="1996" name="Nucleic Acids Res.">
        <title>Complete sequence analysis of the genome of the bacterium Mycoplasma pneumoniae.</title>
        <authorList>
            <person name="Himmelreich R."/>
            <person name="Hilbert H."/>
            <person name="Plagens H."/>
            <person name="Pirkl E."/>
            <person name="Li B.-C."/>
            <person name="Herrmann R."/>
        </authorList>
    </citation>
    <scope>NUCLEOTIDE SEQUENCE [LARGE SCALE GENOMIC DNA]</scope>
    <source>
        <strain>ATCC 29342 / M129 / Subtype 1</strain>
    </source>
</reference>
<dbReference type="EMBL" id="U00089">
    <property type="protein sequence ID" value="AAB95856.1"/>
    <property type="molecule type" value="Genomic_DNA"/>
</dbReference>
<dbReference type="PIR" id="S73534">
    <property type="entry name" value="S73534"/>
</dbReference>
<dbReference type="RefSeq" id="WP_010874991.1">
    <property type="nucleotide sequence ID" value="NC_000912.1"/>
</dbReference>
<dbReference type="STRING" id="272634.MPN_634"/>
<dbReference type="EnsemblBacteria" id="AAB95856">
    <property type="protein sequence ID" value="AAB95856"/>
    <property type="gene ID" value="MPN_634"/>
</dbReference>
<dbReference type="KEGG" id="mpn:MPN_634"/>
<dbReference type="HOGENOM" id="CLU_1516286_0_0_14"/>
<dbReference type="Proteomes" id="UP000000808">
    <property type="component" value="Chromosome"/>
</dbReference>
<accession>P75163</accession>
<proteinExistence type="predicted"/>
<name>Y634_MYCPN</name>
<keyword id="KW-1185">Reference proteome</keyword>
<protein>
    <recommendedName>
        <fullName>Uncharacterized protein MPN_634</fullName>
    </recommendedName>
</protein>
<gene>
    <name type="ordered locus">MPN_634</name>
    <name type="ORF">C12_orf181o</name>
    <name type="ORF">MP208</name>
</gene>
<comment type="similarity">
    <text evidence="1">To M.pneumoniae MPN_635 C-terminal region.</text>
</comment>
<evidence type="ECO:0000305" key="1"/>
<organism>
    <name type="scientific">Mycoplasma pneumoniae (strain ATCC 29342 / M129 / Subtype 1)</name>
    <name type="common">Mycoplasmoides pneumoniae</name>
    <dbReference type="NCBI Taxonomy" id="272634"/>
    <lineage>
        <taxon>Bacteria</taxon>
        <taxon>Bacillati</taxon>
        <taxon>Mycoplasmatota</taxon>
        <taxon>Mycoplasmoidales</taxon>
        <taxon>Mycoplasmoidaceae</taxon>
        <taxon>Mycoplasmoides</taxon>
    </lineage>
</organism>
<sequence length="181" mass="21358">MQNTNRKILWTSNESSDIAAPAYQTWAQEEGYEIISIGSSQYQSMENDAEFKSYTLNDFGDRFVNEFQTEEVPFHKLTEIEKDNWNWVMAKVKELTRVWSNWKNLYKHYEFSIIKKHPNAEGLHSNGRIQIVRKILNERSHLFNTIMHEICHATSFSPDVSQRFEQGLTSAFYPVMKLKPE</sequence>